<proteinExistence type="evidence at protein level"/>
<feature type="chain" id="PRO_0000211396" description="Monocarboxylate transporter 4">
    <location>
        <begin position="1"/>
        <end position="471"/>
    </location>
</feature>
<feature type="topological domain" description="Cytoplasmic" evidence="3">
    <location>
        <begin position="1"/>
        <end position="17"/>
    </location>
</feature>
<feature type="transmembrane region" description="Helical" evidence="3">
    <location>
        <begin position="18"/>
        <end position="38"/>
    </location>
</feature>
<feature type="topological domain" description="Extracellular" evidence="3">
    <location>
        <begin position="39"/>
        <end position="61"/>
    </location>
</feature>
<feature type="transmembrane region" description="Helical" evidence="3">
    <location>
        <begin position="62"/>
        <end position="82"/>
    </location>
</feature>
<feature type="topological domain" description="Cytoplasmic" evidence="3">
    <location>
        <begin position="83"/>
        <end position="84"/>
    </location>
</feature>
<feature type="transmembrane region" description="Helical" evidence="3">
    <location>
        <begin position="85"/>
        <end position="105"/>
    </location>
</feature>
<feature type="topological domain" description="Extracellular" evidence="3">
    <location>
        <begin position="106"/>
        <end position="109"/>
    </location>
</feature>
<feature type="transmembrane region" description="Helical" evidence="3">
    <location>
        <begin position="110"/>
        <end position="130"/>
    </location>
</feature>
<feature type="topological domain" description="Cytoplasmic" evidence="3">
    <location>
        <begin position="131"/>
        <end position="149"/>
    </location>
</feature>
<feature type="transmembrane region" description="Helical" evidence="3">
    <location>
        <begin position="150"/>
        <end position="170"/>
    </location>
</feature>
<feature type="topological domain" description="Extracellular" evidence="3">
    <location>
        <begin position="171"/>
        <end position="179"/>
    </location>
</feature>
<feature type="transmembrane region" description="Helical" evidence="3">
    <location>
        <begin position="180"/>
        <end position="200"/>
    </location>
</feature>
<feature type="topological domain" description="Cytoplasmic" evidence="3">
    <location>
        <begin position="201"/>
        <end position="231"/>
    </location>
</feature>
<feature type="transmembrane region" description="Helical" evidence="3">
    <location>
        <begin position="232"/>
        <end position="252"/>
    </location>
</feature>
<feature type="topological domain" description="Extracellular" evidence="3">
    <location>
        <begin position="253"/>
        <end position="267"/>
    </location>
</feature>
<feature type="transmembrane region" description="Helical" evidence="3">
    <location>
        <begin position="268"/>
        <end position="288"/>
    </location>
</feature>
<feature type="topological domain" description="Cytoplasmic" evidence="3">
    <location>
        <begin position="289"/>
        <end position="298"/>
    </location>
</feature>
<feature type="transmembrane region" description="Helical" evidence="3">
    <location>
        <begin position="299"/>
        <end position="319"/>
    </location>
</feature>
<feature type="topological domain" description="Extracellular" evidence="3">
    <location>
        <begin position="320"/>
        <end position="321"/>
    </location>
</feature>
<feature type="transmembrane region" description="Helical" evidence="3">
    <location>
        <begin position="322"/>
        <end position="342"/>
    </location>
</feature>
<feature type="topological domain" description="Cytoplasmic" evidence="3">
    <location>
        <begin position="343"/>
        <end position="355"/>
    </location>
</feature>
<feature type="transmembrane region" description="Helical" evidence="3">
    <location>
        <begin position="356"/>
        <end position="376"/>
    </location>
</feature>
<feature type="topological domain" description="Extracellular" evidence="3">
    <location>
        <begin position="377"/>
        <end position="391"/>
    </location>
</feature>
<feature type="transmembrane region" description="Helical" evidence="3">
    <location>
        <begin position="392"/>
        <end position="412"/>
    </location>
</feature>
<feature type="topological domain" description="Cytoplasmic" evidence="3">
    <location>
        <begin position="413"/>
        <end position="471"/>
    </location>
</feature>
<feature type="region of interest" description="Basolateral sorting signal" evidence="1">
    <location>
        <begin position="429"/>
        <end position="447"/>
    </location>
</feature>
<feature type="region of interest" description="Basolateral sorting signal" evidence="1">
    <location>
        <begin position="447"/>
        <end position="471"/>
    </location>
</feature>
<feature type="modified residue" description="Phosphoserine" evidence="2">
    <location>
        <position position="430"/>
    </location>
</feature>
<feature type="modified residue" description="Phosphothreonine" evidence="1">
    <location>
        <position position="466"/>
    </location>
</feature>
<feature type="modified residue" description="Phosphoserine" evidence="1">
    <location>
        <position position="470"/>
    </location>
</feature>
<evidence type="ECO:0000250" key="1">
    <source>
        <dbReference type="UniProtKB" id="O15427"/>
    </source>
</evidence>
<evidence type="ECO:0000250" key="2">
    <source>
        <dbReference type="UniProtKB" id="P57787"/>
    </source>
</evidence>
<evidence type="ECO:0000255" key="3"/>
<evidence type="ECO:0000269" key="4">
    <source>
    </source>
</evidence>
<evidence type="ECO:0000269" key="5">
    <source>
    </source>
</evidence>
<evidence type="ECO:0000303" key="6">
    <source>
    </source>
</evidence>
<evidence type="ECO:0000305" key="7"/>
<evidence type="ECO:0000305" key="8">
    <source>
    </source>
</evidence>
<name>MOT4_RAT</name>
<organism>
    <name type="scientific">Rattus norvegicus</name>
    <name type="common">Rat</name>
    <dbReference type="NCBI Taxonomy" id="10116"/>
    <lineage>
        <taxon>Eukaryota</taxon>
        <taxon>Metazoa</taxon>
        <taxon>Chordata</taxon>
        <taxon>Craniata</taxon>
        <taxon>Vertebrata</taxon>
        <taxon>Euteleostomi</taxon>
        <taxon>Mammalia</taxon>
        <taxon>Eutheria</taxon>
        <taxon>Euarchontoglires</taxon>
        <taxon>Glires</taxon>
        <taxon>Rodentia</taxon>
        <taxon>Myomorpha</taxon>
        <taxon>Muroidea</taxon>
        <taxon>Muridae</taxon>
        <taxon>Murinae</taxon>
        <taxon>Rattus</taxon>
    </lineage>
</organism>
<keyword id="KW-1003">Cell membrane</keyword>
<keyword id="KW-0472">Membrane</keyword>
<keyword id="KW-0597">Phosphoprotein</keyword>
<keyword id="KW-1185">Reference proteome</keyword>
<keyword id="KW-0769">Symport</keyword>
<keyword id="KW-0812">Transmembrane</keyword>
<keyword id="KW-1133">Transmembrane helix</keyword>
<keyword id="KW-0813">Transport</keyword>
<dbReference type="EMBL" id="U87627">
    <property type="protein sequence ID" value="AAC53591.1"/>
    <property type="molecule type" value="mRNA"/>
</dbReference>
<dbReference type="RefSeq" id="NP_110461.1">
    <property type="nucleotide sequence ID" value="NM_030834.1"/>
</dbReference>
<dbReference type="RefSeq" id="XP_006247993.1">
    <property type="nucleotide sequence ID" value="XM_006247931.3"/>
</dbReference>
<dbReference type="RefSeq" id="XP_006247994.1">
    <property type="nucleotide sequence ID" value="XM_006247932.2"/>
</dbReference>
<dbReference type="RefSeq" id="XP_006247995.1">
    <property type="nucleotide sequence ID" value="XM_006247933.3"/>
</dbReference>
<dbReference type="RefSeq" id="XP_006247996.1">
    <property type="nucleotide sequence ID" value="XM_006247934.3"/>
</dbReference>
<dbReference type="RefSeq" id="XP_008766735.1">
    <property type="nucleotide sequence ID" value="XM_008768513.2"/>
</dbReference>
<dbReference type="RefSeq" id="XP_063126004.1">
    <property type="nucleotide sequence ID" value="XM_063269934.1"/>
</dbReference>
<dbReference type="RefSeq" id="XP_063126005.1">
    <property type="nucleotide sequence ID" value="XM_063269935.1"/>
</dbReference>
<dbReference type="SMR" id="O35910"/>
<dbReference type="FunCoup" id="O35910">
    <property type="interactions" value="51"/>
</dbReference>
<dbReference type="STRING" id="10116.ENSRNOP00000051822"/>
<dbReference type="ChEMBL" id="CHEMBL5291501"/>
<dbReference type="PhosphoSitePlus" id="O35910"/>
<dbReference type="PaxDb" id="10116-ENSRNOP00000051822"/>
<dbReference type="Ensembl" id="ENSRNOT00000054939.4">
    <property type="protein sequence ID" value="ENSRNOP00000051822.3"/>
    <property type="gene ID" value="ENSRNOG00000036677.5"/>
</dbReference>
<dbReference type="GeneID" id="80878"/>
<dbReference type="KEGG" id="rno:80878"/>
<dbReference type="AGR" id="RGD:620603"/>
<dbReference type="CTD" id="9123"/>
<dbReference type="RGD" id="620603">
    <property type="gene designation" value="Slc16a3"/>
</dbReference>
<dbReference type="eggNOG" id="KOG2504">
    <property type="taxonomic scope" value="Eukaryota"/>
</dbReference>
<dbReference type="GeneTree" id="ENSGT00940000158181"/>
<dbReference type="InParanoid" id="O35910"/>
<dbReference type="OrthoDB" id="51465at9989"/>
<dbReference type="PhylomeDB" id="O35910"/>
<dbReference type="Reactome" id="R-RNO-210991">
    <property type="pathway name" value="Basigin interactions"/>
</dbReference>
<dbReference type="Reactome" id="R-RNO-433692">
    <property type="pathway name" value="Proton-coupled monocarboxylate transport"/>
</dbReference>
<dbReference type="PRO" id="PR:O35910"/>
<dbReference type="Proteomes" id="UP000002494">
    <property type="component" value="Chromosome 10"/>
</dbReference>
<dbReference type="Bgee" id="ENSRNOG00000036677">
    <property type="expression patterns" value="Expressed in skeletal muscle tissue and 20 other cell types or tissues"/>
</dbReference>
<dbReference type="ExpressionAtlas" id="O35910">
    <property type="expression patterns" value="baseline and differential"/>
</dbReference>
<dbReference type="GO" id="GO:0016324">
    <property type="term" value="C:apical plasma membrane"/>
    <property type="evidence" value="ECO:0000266"/>
    <property type="project" value="RGD"/>
</dbReference>
<dbReference type="GO" id="GO:0016323">
    <property type="term" value="C:basolateral plasma membrane"/>
    <property type="evidence" value="ECO:0000250"/>
    <property type="project" value="UniProtKB"/>
</dbReference>
<dbReference type="GO" id="GO:0016328">
    <property type="term" value="C:lateral plasma membrane"/>
    <property type="evidence" value="ECO:0000266"/>
    <property type="project" value="RGD"/>
</dbReference>
<dbReference type="GO" id="GO:0031965">
    <property type="term" value="C:nuclear membrane"/>
    <property type="evidence" value="ECO:0007669"/>
    <property type="project" value="Ensembl"/>
</dbReference>
<dbReference type="GO" id="GO:0005886">
    <property type="term" value="C:plasma membrane"/>
    <property type="evidence" value="ECO:0000314"/>
    <property type="project" value="UniProtKB"/>
</dbReference>
<dbReference type="GO" id="GO:0015129">
    <property type="term" value="F:lactate transmembrane transporter activity"/>
    <property type="evidence" value="ECO:0000266"/>
    <property type="project" value="RGD"/>
</dbReference>
<dbReference type="GO" id="GO:0015650">
    <property type="term" value="F:lactate:proton symporter activity"/>
    <property type="evidence" value="ECO:0000314"/>
    <property type="project" value="UniProtKB"/>
</dbReference>
<dbReference type="GO" id="GO:0050833">
    <property type="term" value="F:pyruvate transmembrane transporter activity"/>
    <property type="evidence" value="ECO:0000250"/>
    <property type="project" value="UniProtKB"/>
</dbReference>
<dbReference type="GO" id="GO:0035873">
    <property type="term" value="P:lactate transmembrane transport"/>
    <property type="evidence" value="ECO:0000266"/>
    <property type="project" value="RGD"/>
</dbReference>
<dbReference type="GO" id="GO:0035879">
    <property type="term" value="P:plasma membrane lactate transport"/>
    <property type="evidence" value="ECO:0000314"/>
    <property type="project" value="UniProtKB"/>
</dbReference>
<dbReference type="GO" id="GO:0042867">
    <property type="term" value="P:pyruvate catabolic process"/>
    <property type="evidence" value="ECO:0000266"/>
    <property type="project" value="RGD"/>
</dbReference>
<dbReference type="GO" id="GO:1901475">
    <property type="term" value="P:pyruvate transmembrane transport"/>
    <property type="evidence" value="ECO:0000250"/>
    <property type="project" value="UniProtKB"/>
</dbReference>
<dbReference type="CDD" id="cd17430">
    <property type="entry name" value="MFS_MCT3_4"/>
    <property type="match status" value="1"/>
</dbReference>
<dbReference type="FunFam" id="1.20.1250.20:FF:000077">
    <property type="entry name" value="Proton-coupled monocarboxylate transporter 3"/>
    <property type="match status" value="1"/>
</dbReference>
<dbReference type="Gene3D" id="1.20.1250.20">
    <property type="entry name" value="MFS general substrate transporter like domains"/>
    <property type="match status" value="1"/>
</dbReference>
<dbReference type="InterPro" id="IPR004743">
    <property type="entry name" value="MCT"/>
</dbReference>
<dbReference type="InterPro" id="IPR011701">
    <property type="entry name" value="MFS"/>
</dbReference>
<dbReference type="InterPro" id="IPR020846">
    <property type="entry name" value="MFS_dom"/>
</dbReference>
<dbReference type="InterPro" id="IPR036259">
    <property type="entry name" value="MFS_trans_sf"/>
</dbReference>
<dbReference type="InterPro" id="IPR050327">
    <property type="entry name" value="Proton-linked_MCT"/>
</dbReference>
<dbReference type="NCBIfam" id="TIGR00892">
    <property type="entry name" value="2A0113"/>
    <property type="match status" value="1"/>
</dbReference>
<dbReference type="PANTHER" id="PTHR11360">
    <property type="entry name" value="MONOCARBOXYLATE TRANSPORTER"/>
    <property type="match status" value="1"/>
</dbReference>
<dbReference type="PANTHER" id="PTHR11360:SF27">
    <property type="entry name" value="MONOCARBOXYLATE TRANSPORTER 4"/>
    <property type="match status" value="1"/>
</dbReference>
<dbReference type="Pfam" id="PF07690">
    <property type="entry name" value="MFS_1"/>
    <property type="match status" value="1"/>
</dbReference>
<dbReference type="SUPFAM" id="SSF103473">
    <property type="entry name" value="MFS general substrate transporter"/>
    <property type="match status" value="1"/>
</dbReference>
<dbReference type="PROSITE" id="PS50850">
    <property type="entry name" value="MFS"/>
    <property type="match status" value="1"/>
</dbReference>
<comment type="function">
    <text evidence="1 4 5">Proton-dependent transporter of monocarboxylates such as L-lactate and pyruvate (By similarity) (PubMed:10926847, PubMed:9632638). Plays a predominant role in the L-lactate efflux from highly glycolytic cells (PubMed:10926847, PubMed:9632638).</text>
</comment>
<comment type="catalytic activity">
    <reaction evidence="4 5">
        <text>(S)-lactate(in) + H(+)(in) = (S)-lactate(out) + H(+)(out)</text>
        <dbReference type="Rhea" id="RHEA:29415"/>
        <dbReference type="ChEBI" id="CHEBI:15378"/>
        <dbReference type="ChEBI" id="CHEBI:16651"/>
    </reaction>
    <physiologicalReaction direction="left-to-right" evidence="8">
        <dbReference type="Rhea" id="RHEA:29416"/>
    </physiologicalReaction>
</comment>
<comment type="catalytic activity">
    <reaction evidence="1">
        <text>pyruvate(out) + H(+)(out) = pyruvate(in) + H(+)(in)</text>
        <dbReference type="Rhea" id="RHEA:64720"/>
        <dbReference type="ChEBI" id="CHEBI:15361"/>
        <dbReference type="ChEBI" id="CHEBI:15378"/>
    </reaction>
</comment>
<comment type="biophysicochemical properties">
    <kinetics>
        <KM evidence="5">10.1 mM for (S)-lactate</KM>
        <KM evidence="4">33.7 mM for (S)-lactate</KM>
    </kinetics>
</comment>
<comment type="subunit">
    <text evidence="1">Interacts with BSG; interaction mediates SLC16A3 targeting to the plasma membrane.</text>
</comment>
<comment type="subcellular location">
    <subcellularLocation>
        <location evidence="1">Cell membrane</location>
        <topology evidence="1">Multi-pass membrane protein</topology>
    </subcellularLocation>
    <subcellularLocation>
        <location evidence="1">Basolateral cell membrane</location>
        <topology evidence="3">Multi-pass membrane protein</topology>
    </subcellularLocation>
    <text evidence="1">Plasma membrane localization is dependent upon the BSG/MCT4 interaction. Basolateral sorting signals (BLSS) in C-terminal cytoplasmic tail ensure its basolateral expression in polarised epithelial cells.</text>
</comment>
<comment type="tissue specificity">
    <text evidence="4 5">Detected in testis, small intestine, parotid gland, lung and brain. Small amounts are detected in heart, kidney and spleen (PubMed:10926847). Expressed in skeletal muscle (PubMed:9632638).</text>
</comment>
<comment type="domain">
    <text evidence="1">Two basolateral sorting signals (BSS) in its C-terminal cytoplasmic tail are required to direct SLC16A3 to the basolateral membrane.</text>
</comment>
<comment type="similarity">
    <text evidence="7">Belongs to the major facilitator superfamily. Monocarboxylate porter (TC 2.A.1.13) family.</text>
</comment>
<comment type="caution">
    <text evidence="1">Was initially thought to be considered to be a low affinity lactate transporter with negligible affinity for pyruvate (By similarity). However, it was later shown that SLC16A3 is a high affinity lactate transporter with physiologically relevant affinity for pyruvate (By similarity).</text>
</comment>
<comment type="caution">
    <text>Was initially assigned as monocarboxylate transporter 3 (MCT3) (PubMed:9632638). However, it was later shown that it corresponds to monocarboxylate transporter 4 (MCT4).</text>
</comment>
<reference key="1">
    <citation type="journal article" date="1998" name="J. Biol. Chem.">
        <title>Lactic acid efflux from white skeletal muscle is catalyzed by the monocarboxylate transporter isoform MCT3.</title>
        <authorList>
            <person name="Wilson M.C."/>
            <person name="Jackson V.N."/>
            <person name="Heddle C."/>
            <person name="Price N.T."/>
            <person name="Pilegaard H."/>
            <person name="Juel C."/>
            <person name="Bonen A."/>
            <person name="Montgomery I."/>
            <person name="Hutter O.F."/>
            <person name="Halestrap A.P."/>
        </authorList>
    </citation>
    <scope>NUCLEOTIDE SEQUENCE [MRNA]</scope>
    <scope>FUNCTION</scope>
    <scope>TRANSPORTER ACTIVITY</scope>
    <scope>BIOPHYSICOCHEMICAL PROPERTIES</scope>
    <scope>TISSUE SPECIFICITY</scope>
    <scope>SUBCELLULAR LOCATION</scope>
    <source>
        <strain>Wistar</strain>
        <tissue>Skeletal muscle</tissue>
    </source>
</reference>
<reference key="2">
    <citation type="journal article" date="2000" name="Biochem. J.">
        <title>The low-affinity monocarboxylate transporter MCT4 is adapted to the export of lactate in highly glycolytic cells.</title>
        <authorList>
            <person name="Dimmer K.S."/>
            <person name="Friedrich B."/>
            <person name="Lang F."/>
            <person name="Deitmer J.W."/>
            <person name="Broeer S."/>
        </authorList>
    </citation>
    <scope>FUNCTION</scope>
    <scope>TRANSPORTER ACTIVITY</scope>
    <scope>BIOPHYSICOCHEMICAL PROPERTIES</scope>
    <scope>TISSUE SPECIFICITY</scope>
</reference>
<reference key="3">
    <citation type="journal article" date="2012" name="Nat. Commun.">
        <title>Quantitative maps of protein phosphorylation sites across 14 different rat organs and tissues.</title>
        <authorList>
            <person name="Lundby A."/>
            <person name="Secher A."/>
            <person name="Lage K."/>
            <person name="Nordsborg N.B."/>
            <person name="Dmytriyev A."/>
            <person name="Lundby C."/>
            <person name="Olsen J.V."/>
        </authorList>
    </citation>
    <scope>IDENTIFICATION BY MASS SPECTROMETRY [LARGE SCALE ANALYSIS]</scope>
</reference>
<accession>O35910</accession>
<sequence>MGGAVVDEGPTGIKAPDGGWGWAVLFGCFIITGFSYAFPKAVSVFFKELMHEFGIGYSDTAWISSILLAMLYGTGPLCSMCVNRFGCRPVMLVGGLFASLGMVAASFCRSIIQIYLTTGVITGLGLALNFQPSLIMLNRYFNKRRPMANGLAAAGSPVFLCALSPLGQLLQDHYGWRGGFLILGGLLLNCCVCAALMRPLVAPQASGGAEPHGPQRPSPRLLDLSVFRDRGFLIYAVAASIMVLGLFVPPVFVVSYAKDMGVPDTKAAFLLTILGFIDIFARPTAGFITGLKKVRPYSVYLFSFAMFFNGFTDLTGSTASDYGGLVVFCIFFGISYGMVGALQFEVLMAIVGTQKFSSAIGLVLLLEAVAVLIGPPSGGKLLDATKVYKYVFILAGAEVLTSSLVLLLGNFFCIGKRKRPEVTKPEEVASEEEKLHKPPVDVRVDSREVEHFLKAEPEKNGEVVHTPETSV</sequence>
<gene>
    <name type="primary">Slc16a3</name>
    <name evidence="6" type="synonym">Mct3</name>
    <name type="synonym">Mct4</name>
</gene>
<protein>
    <recommendedName>
        <fullName>Monocarboxylate transporter 4</fullName>
        <shortName>MCT 4</shortName>
    </recommendedName>
    <alternativeName>
        <fullName evidence="6">Monocarboxylate transporter 3</fullName>
        <shortName>MCT 3</shortName>
    </alternativeName>
    <alternativeName>
        <fullName>Solute carrier family 16 member 3</fullName>
    </alternativeName>
</protein>